<comment type="function">
    <text evidence="1">Catalyzes the attachment of L-aspartate to tRNA(Asp) in a two-step reaction: L-aspartate is first activated by ATP to form Asp-AMP and then transferred to the acceptor end of tRNA(Asp).</text>
</comment>
<comment type="catalytic activity">
    <reaction evidence="1">
        <text>tRNA(Asp) + L-aspartate + ATP = L-aspartyl-tRNA(Asp) + AMP + diphosphate</text>
        <dbReference type="Rhea" id="RHEA:19649"/>
        <dbReference type="Rhea" id="RHEA-COMP:9660"/>
        <dbReference type="Rhea" id="RHEA-COMP:9678"/>
        <dbReference type="ChEBI" id="CHEBI:29991"/>
        <dbReference type="ChEBI" id="CHEBI:30616"/>
        <dbReference type="ChEBI" id="CHEBI:33019"/>
        <dbReference type="ChEBI" id="CHEBI:78442"/>
        <dbReference type="ChEBI" id="CHEBI:78516"/>
        <dbReference type="ChEBI" id="CHEBI:456215"/>
        <dbReference type="EC" id="6.1.1.12"/>
    </reaction>
</comment>
<comment type="subunit">
    <text evidence="1">Homodimer.</text>
</comment>
<comment type="subcellular location">
    <subcellularLocation>
        <location evidence="1">Cytoplasm</location>
    </subcellularLocation>
</comment>
<comment type="similarity">
    <text evidence="1">Belongs to the class-II aminoacyl-tRNA synthetase family. Type 1 subfamily.</text>
</comment>
<organism>
    <name type="scientific">Streptococcus equi subsp. equi (strain 4047)</name>
    <dbReference type="NCBI Taxonomy" id="553482"/>
    <lineage>
        <taxon>Bacteria</taxon>
        <taxon>Bacillati</taxon>
        <taxon>Bacillota</taxon>
        <taxon>Bacilli</taxon>
        <taxon>Lactobacillales</taxon>
        <taxon>Streptococcaceae</taxon>
        <taxon>Streptococcus</taxon>
    </lineage>
</organism>
<keyword id="KW-0030">Aminoacyl-tRNA synthetase</keyword>
<keyword id="KW-0067">ATP-binding</keyword>
<keyword id="KW-0963">Cytoplasm</keyword>
<keyword id="KW-0436">Ligase</keyword>
<keyword id="KW-0547">Nucleotide-binding</keyword>
<keyword id="KW-0648">Protein biosynthesis</keyword>
<protein>
    <recommendedName>
        <fullName evidence="1">Aspartate--tRNA ligase</fullName>
        <ecNumber evidence="1">6.1.1.12</ecNumber>
    </recommendedName>
    <alternativeName>
        <fullName evidence="1">Aspartyl-tRNA synthetase</fullName>
        <shortName evidence="1">AspRS</shortName>
    </alternativeName>
</protein>
<sequence>MKRSMYAGHVRKEHIGRTIVLKGWVSRRRDLGGLIFIDLRDREGVMQLVINPEDVSGDVMATAERLRSEYVIEVEGSVEARQQANDKLATGAVELKVSGLTILNTAKTTPFEIKDGVEVSDDTRLRYRYLDLRRPEMLESFKLRAKTTHVIRNYLDNLGFIDVETPMLTKSTPEGARDYLVPSRISQGHFYALPQSPQITKQLLMNAGFDRYYQIVKCFRDEDLRGDRQPEFTQVDLETSFLSEQEIQDIVEGMIAKVMKDTKGIEVKLPFPRMAYDDAMNHYGSDKPDTRFDMLLQDLTDLVKEIDFKVFSEAQAVKAIVVKGHADRYSRKDIDKLTEFAKQFGAKGLAWLKVVDGAFTGPIAKFLTGVKSKLTESLQLEHNDLVLFVADTLEVANNTLGALRTRIAKELDMIDMSQFNFLWVVDWPMFEWSEEEERYMSAHHPFTLPTAESAHELEGDLAKVRAVAYDIVLNGYELGGGSLRINQKDMQERMFRALGFTAEEANEQFGFLLEAMEYGFPPHGGLAIGLDRLVMLLAGKDNIREVIAFPKNNKASDPMTQAPSLVSEKQLEELQLQIEHHD</sequence>
<accession>C0MB16</accession>
<feature type="chain" id="PRO_1000199012" description="Aspartate--tRNA ligase">
    <location>
        <begin position="1"/>
        <end position="582"/>
    </location>
</feature>
<feature type="region of interest" description="Aspartate" evidence="1">
    <location>
        <begin position="198"/>
        <end position="201"/>
    </location>
</feature>
<feature type="binding site" evidence="1">
    <location>
        <position position="174"/>
    </location>
    <ligand>
        <name>L-aspartate</name>
        <dbReference type="ChEBI" id="CHEBI:29991"/>
    </ligand>
</feature>
<feature type="binding site" evidence="1">
    <location>
        <begin position="220"/>
        <end position="222"/>
    </location>
    <ligand>
        <name>ATP</name>
        <dbReference type="ChEBI" id="CHEBI:30616"/>
    </ligand>
</feature>
<feature type="binding site" evidence="1">
    <location>
        <position position="220"/>
    </location>
    <ligand>
        <name>L-aspartate</name>
        <dbReference type="ChEBI" id="CHEBI:29991"/>
    </ligand>
</feature>
<feature type="binding site" evidence="1">
    <location>
        <position position="229"/>
    </location>
    <ligand>
        <name>ATP</name>
        <dbReference type="ChEBI" id="CHEBI:30616"/>
    </ligand>
</feature>
<feature type="binding site" evidence="1">
    <location>
        <position position="443"/>
    </location>
    <ligand>
        <name>L-aspartate</name>
        <dbReference type="ChEBI" id="CHEBI:29991"/>
    </ligand>
</feature>
<feature type="binding site" evidence="1">
    <location>
        <position position="477"/>
    </location>
    <ligand>
        <name>ATP</name>
        <dbReference type="ChEBI" id="CHEBI:30616"/>
    </ligand>
</feature>
<feature type="binding site" evidence="1">
    <location>
        <position position="484"/>
    </location>
    <ligand>
        <name>L-aspartate</name>
        <dbReference type="ChEBI" id="CHEBI:29991"/>
    </ligand>
</feature>
<feature type="binding site" evidence="1">
    <location>
        <begin position="529"/>
        <end position="532"/>
    </location>
    <ligand>
        <name>ATP</name>
        <dbReference type="ChEBI" id="CHEBI:30616"/>
    </ligand>
</feature>
<gene>
    <name evidence="1" type="primary">aspS</name>
    <name type="ordered locus">SEQ_2169</name>
</gene>
<proteinExistence type="inferred from homology"/>
<dbReference type="EC" id="6.1.1.12" evidence="1"/>
<dbReference type="EMBL" id="FM204883">
    <property type="protein sequence ID" value="CAW95543.1"/>
    <property type="molecule type" value="Genomic_DNA"/>
</dbReference>
<dbReference type="RefSeq" id="WP_015898672.1">
    <property type="nucleotide sequence ID" value="NC_012471.1"/>
</dbReference>
<dbReference type="SMR" id="C0MB16"/>
<dbReference type="KEGG" id="seu:SEQ_2169"/>
<dbReference type="HOGENOM" id="CLU_014330_3_2_9"/>
<dbReference type="OrthoDB" id="9802326at2"/>
<dbReference type="Proteomes" id="UP000001365">
    <property type="component" value="Chromosome"/>
</dbReference>
<dbReference type="GO" id="GO:0005737">
    <property type="term" value="C:cytoplasm"/>
    <property type="evidence" value="ECO:0007669"/>
    <property type="project" value="UniProtKB-SubCell"/>
</dbReference>
<dbReference type="GO" id="GO:0004815">
    <property type="term" value="F:aspartate-tRNA ligase activity"/>
    <property type="evidence" value="ECO:0007669"/>
    <property type="project" value="UniProtKB-UniRule"/>
</dbReference>
<dbReference type="GO" id="GO:0005524">
    <property type="term" value="F:ATP binding"/>
    <property type="evidence" value="ECO:0007669"/>
    <property type="project" value="UniProtKB-UniRule"/>
</dbReference>
<dbReference type="GO" id="GO:0140096">
    <property type="term" value="F:catalytic activity, acting on a protein"/>
    <property type="evidence" value="ECO:0007669"/>
    <property type="project" value="UniProtKB-ARBA"/>
</dbReference>
<dbReference type="GO" id="GO:0003676">
    <property type="term" value="F:nucleic acid binding"/>
    <property type="evidence" value="ECO:0007669"/>
    <property type="project" value="InterPro"/>
</dbReference>
<dbReference type="GO" id="GO:0016740">
    <property type="term" value="F:transferase activity"/>
    <property type="evidence" value="ECO:0007669"/>
    <property type="project" value="UniProtKB-ARBA"/>
</dbReference>
<dbReference type="GO" id="GO:0006422">
    <property type="term" value="P:aspartyl-tRNA aminoacylation"/>
    <property type="evidence" value="ECO:0007669"/>
    <property type="project" value="UniProtKB-UniRule"/>
</dbReference>
<dbReference type="CDD" id="cd00777">
    <property type="entry name" value="AspRS_core"/>
    <property type="match status" value="1"/>
</dbReference>
<dbReference type="CDD" id="cd04317">
    <property type="entry name" value="EcAspRS_like_N"/>
    <property type="match status" value="1"/>
</dbReference>
<dbReference type="Gene3D" id="3.30.930.10">
    <property type="entry name" value="Bira Bifunctional Protein, Domain 2"/>
    <property type="match status" value="1"/>
</dbReference>
<dbReference type="Gene3D" id="3.30.1360.30">
    <property type="entry name" value="GAD-like domain"/>
    <property type="match status" value="1"/>
</dbReference>
<dbReference type="Gene3D" id="2.40.50.140">
    <property type="entry name" value="Nucleic acid-binding proteins"/>
    <property type="match status" value="1"/>
</dbReference>
<dbReference type="HAMAP" id="MF_00044">
    <property type="entry name" value="Asp_tRNA_synth_type1"/>
    <property type="match status" value="1"/>
</dbReference>
<dbReference type="InterPro" id="IPR004364">
    <property type="entry name" value="Aa-tRNA-synt_II"/>
</dbReference>
<dbReference type="InterPro" id="IPR006195">
    <property type="entry name" value="aa-tRNA-synth_II"/>
</dbReference>
<dbReference type="InterPro" id="IPR045864">
    <property type="entry name" value="aa-tRNA-synth_II/BPL/LPL"/>
</dbReference>
<dbReference type="InterPro" id="IPR004524">
    <property type="entry name" value="Asp-tRNA-ligase_1"/>
</dbReference>
<dbReference type="InterPro" id="IPR047089">
    <property type="entry name" value="Asp-tRNA-ligase_1_N"/>
</dbReference>
<dbReference type="InterPro" id="IPR002312">
    <property type="entry name" value="Asp/Asn-tRNA-synth_IIb"/>
</dbReference>
<dbReference type="InterPro" id="IPR047090">
    <property type="entry name" value="AspRS_core"/>
</dbReference>
<dbReference type="InterPro" id="IPR004115">
    <property type="entry name" value="GAD-like_sf"/>
</dbReference>
<dbReference type="InterPro" id="IPR029351">
    <property type="entry name" value="GAD_dom"/>
</dbReference>
<dbReference type="InterPro" id="IPR012340">
    <property type="entry name" value="NA-bd_OB-fold"/>
</dbReference>
<dbReference type="InterPro" id="IPR004365">
    <property type="entry name" value="NA-bd_OB_tRNA"/>
</dbReference>
<dbReference type="NCBIfam" id="TIGR00459">
    <property type="entry name" value="aspS_bact"/>
    <property type="match status" value="1"/>
</dbReference>
<dbReference type="NCBIfam" id="NF001750">
    <property type="entry name" value="PRK00476.1"/>
    <property type="match status" value="1"/>
</dbReference>
<dbReference type="PANTHER" id="PTHR22594:SF5">
    <property type="entry name" value="ASPARTATE--TRNA LIGASE, MITOCHONDRIAL"/>
    <property type="match status" value="1"/>
</dbReference>
<dbReference type="PANTHER" id="PTHR22594">
    <property type="entry name" value="ASPARTYL/LYSYL-TRNA SYNTHETASE"/>
    <property type="match status" value="1"/>
</dbReference>
<dbReference type="Pfam" id="PF02938">
    <property type="entry name" value="GAD"/>
    <property type="match status" value="1"/>
</dbReference>
<dbReference type="Pfam" id="PF00152">
    <property type="entry name" value="tRNA-synt_2"/>
    <property type="match status" value="1"/>
</dbReference>
<dbReference type="Pfam" id="PF01336">
    <property type="entry name" value="tRNA_anti-codon"/>
    <property type="match status" value="1"/>
</dbReference>
<dbReference type="PRINTS" id="PR01042">
    <property type="entry name" value="TRNASYNTHASP"/>
</dbReference>
<dbReference type="SUPFAM" id="SSF55681">
    <property type="entry name" value="Class II aaRS and biotin synthetases"/>
    <property type="match status" value="1"/>
</dbReference>
<dbReference type="SUPFAM" id="SSF55261">
    <property type="entry name" value="GAD domain-like"/>
    <property type="match status" value="1"/>
</dbReference>
<dbReference type="SUPFAM" id="SSF50249">
    <property type="entry name" value="Nucleic acid-binding proteins"/>
    <property type="match status" value="1"/>
</dbReference>
<dbReference type="PROSITE" id="PS50862">
    <property type="entry name" value="AA_TRNA_LIGASE_II"/>
    <property type="match status" value="1"/>
</dbReference>
<reference key="1">
    <citation type="journal article" date="2009" name="PLoS Pathog.">
        <title>Genomic evidence for the evolution of Streptococcus equi: host restriction, increased virulence, and genetic exchange with human pathogens.</title>
        <authorList>
            <person name="Holden M.T.G."/>
            <person name="Heather Z."/>
            <person name="Paillot R."/>
            <person name="Steward K.F."/>
            <person name="Webb K."/>
            <person name="Ainslie F."/>
            <person name="Jourdan T."/>
            <person name="Bason N.C."/>
            <person name="Holroyd N.E."/>
            <person name="Mungall K."/>
            <person name="Quail M.A."/>
            <person name="Sanders M."/>
            <person name="Simmonds M."/>
            <person name="Willey D."/>
            <person name="Brooks K."/>
            <person name="Aanensen D.M."/>
            <person name="Spratt B.G."/>
            <person name="Jolley K.A."/>
            <person name="Maiden M.C.J."/>
            <person name="Kehoe M."/>
            <person name="Chanter N."/>
            <person name="Bentley S.D."/>
            <person name="Robinson C."/>
            <person name="Maskell D.J."/>
            <person name="Parkhill J."/>
            <person name="Waller A.S."/>
        </authorList>
    </citation>
    <scope>NUCLEOTIDE SEQUENCE [LARGE SCALE GENOMIC DNA]</scope>
    <source>
        <strain>4047</strain>
    </source>
</reference>
<name>SYD_STRE4</name>
<evidence type="ECO:0000255" key="1">
    <source>
        <dbReference type="HAMAP-Rule" id="MF_00044"/>
    </source>
</evidence>